<organism>
    <name type="scientific">Pseudomonas phage D3</name>
    <name type="common">Bacteriophage D3</name>
    <dbReference type="NCBI Taxonomy" id="2932880"/>
    <lineage>
        <taxon>Viruses</taxon>
        <taxon>Duplodnaviria</taxon>
        <taxon>Heunggongvirae</taxon>
        <taxon>Uroviricota</taxon>
        <taxon>Caudoviricetes</taxon>
        <taxon>Detrevirus</taxon>
        <taxon>Detrevirus D3</taxon>
    </lineage>
</organism>
<gene>
    <name type="primary">cro</name>
</gene>
<dbReference type="EMBL" id="AF165214">
    <property type="protein sequence ID" value="AAA53554.2"/>
    <property type="molecule type" value="Genomic_DNA"/>
</dbReference>
<dbReference type="PIR" id="B55847">
    <property type="entry name" value="B55847"/>
</dbReference>
<dbReference type="RefSeq" id="NP_061566.1">
    <property type="nucleotide sequence ID" value="NC_002484.2"/>
</dbReference>
<dbReference type="SMR" id="Q37907"/>
<dbReference type="GeneID" id="1262917"/>
<dbReference type="KEGG" id="vg:1262917"/>
<dbReference type="Proteomes" id="UP000009085">
    <property type="component" value="Genome"/>
</dbReference>
<dbReference type="GO" id="GO:0003677">
    <property type="term" value="F:DNA binding"/>
    <property type="evidence" value="ECO:0007669"/>
    <property type="project" value="UniProtKB-KW"/>
</dbReference>
<dbReference type="CDD" id="cd00093">
    <property type="entry name" value="HTH_XRE"/>
    <property type="match status" value="1"/>
</dbReference>
<dbReference type="Gene3D" id="1.10.260.40">
    <property type="entry name" value="lambda repressor-like DNA-binding domains"/>
    <property type="match status" value="1"/>
</dbReference>
<dbReference type="InterPro" id="IPR001387">
    <property type="entry name" value="Cro/C1-type_HTH"/>
</dbReference>
<dbReference type="InterPro" id="IPR010982">
    <property type="entry name" value="Lambda_DNA-bd_dom_sf"/>
</dbReference>
<dbReference type="InterPro" id="IPR031856">
    <property type="entry name" value="YdaS_toxin-like"/>
</dbReference>
<dbReference type="Pfam" id="PF15943">
    <property type="entry name" value="YdaS_toxin"/>
    <property type="match status" value="1"/>
</dbReference>
<dbReference type="SUPFAM" id="SSF47413">
    <property type="entry name" value="lambda repressor-like DNA-binding domains"/>
    <property type="match status" value="1"/>
</dbReference>
<sequence length="73" mass="7934">MTTIYKELVAHFGTQDETAAKLGVDQSTVSGWVRGKHGMSPVVAKRAQVLTDGKFKKEDLCPAFPWEVLSAVA</sequence>
<proteinExistence type="inferred from homology"/>
<organismHost>
    <name type="scientific">Pseudomonas aeruginosa</name>
    <dbReference type="NCBI Taxonomy" id="287"/>
</organismHost>
<name>RCRO_BPD3</name>
<evidence type="ECO:0000250" key="1"/>
<comment type="function">
    <text evidence="1">Cro represses genes normally expressed in early phage development and is necessary for the late stage of lytic growth. It does this by binding to the OL and OR operators regions normally used by the repressor protein for lysogenic maintenance (By similarity).</text>
</comment>
<reference key="1">
    <citation type="journal article" date="1994" name="J. Bacteriol.">
        <title>Cloning of the early promoters of Pseudomonas aeruginosa bacteriophage D3: sequence of the immunity region of D3.</title>
        <authorList>
            <person name="Farinha M.A."/>
            <person name="Allan B.J."/>
            <person name="Gertman E.M."/>
            <person name="Ronald S.L."/>
            <person name="Kropinski A.M."/>
        </authorList>
    </citation>
    <scope>NUCLEOTIDE SEQUENCE [GENOMIC DNA]</scope>
</reference>
<reference key="2">
    <citation type="journal article" date="2000" name="J. Bacteriol.">
        <title>Sequence of the genome of the temperate, serotype-converting, Pseudomonas aeruginosa bacteriophage D3.</title>
        <authorList>
            <person name="Kropinski A.M."/>
        </authorList>
    </citation>
    <scope>NUCLEOTIDE SEQUENCE [GENOMIC DNA]</scope>
    <scope>SEQUENCE REVISION TO C-TERMINUS</scope>
</reference>
<keyword id="KW-0238">DNA-binding</keyword>
<keyword id="KW-0244">Early protein</keyword>
<keyword id="KW-1185">Reference proteome</keyword>
<keyword id="KW-0678">Repressor</keyword>
<keyword id="KW-0804">Transcription</keyword>
<keyword id="KW-0805">Transcription regulation</keyword>
<feature type="chain" id="PRO_0000077576" description="Regulatory protein cro">
    <location>
        <begin position="1"/>
        <end position="73"/>
    </location>
</feature>
<feature type="DNA-binding region" description="H-T-H motif" evidence="1">
    <location>
        <begin position="15"/>
        <end position="34"/>
    </location>
</feature>
<protein>
    <recommendedName>
        <fullName>Regulatory protein cro</fullName>
    </recommendedName>
    <alternativeName>
        <fullName>Antirepressor</fullName>
    </alternativeName>
</protein>
<accession>Q37907</accession>